<organism>
    <name type="scientific">Methylobacterium sp. (strain 4-46)</name>
    <dbReference type="NCBI Taxonomy" id="426117"/>
    <lineage>
        <taxon>Bacteria</taxon>
        <taxon>Pseudomonadati</taxon>
        <taxon>Pseudomonadota</taxon>
        <taxon>Alphaproteobacteria</taxon>
        <taxon>Hyphomicrobiales</taxon>
        <taxon>Methylobacteriaceae</taxon>
        <taxon>Methylobacterium</taxon>
    </lineage>
</organism>
<gene>
    <name evidence="2" type="primary">mutM</name>
    <name evidence="2" type="synonym">fpg</name>
    <name type="ordered locus">M446_6254</name>
</gene>
<evidence type="ECO:0000250" key="1"/>
<evidence type="ECO:0000255" key="2">
    <source>
        <dbReference type="HAMAP-Rule" id="MF_00103"/>
    </source>
</evidence>
<comment type="function">
    <text evidence="2">Involved in base excision repair of DNA damaged by oxidation or by mutagenic agents. Acts as a DNA glycosylase that recognizes and removes damaged bases. Has a preference for oxidized purines, such as 7,8-dihydro-8-oxoguanine (8-oxoG). Has AP (apurinic/apyrimidinic) lyase activity and introduces nicks in the DNA strand. Cleaves the DNA backbone by beta-delta elimination to generate a single-strand break at the site of the removed base with both 3'- and 5'-phosphates.</text>
</comment>
<comment type="catalytic activity">
    <reaction evidence="2">
        <text>Hydrolysis of DNA containing ring-opened 7-methylguanine residues, releasing 2,6-diamino-4-hydroxy-5-(N-methyl)formamidopyrimidine.</text>
        <dbReference type="EC" id="3.2.2.23"/>
    </reaction>
</comment>
<comment type="catalytic activity">
    <reaction evidence="2">
        <text>2'-deoxyribonucleotide-(2'-deoxyribose 5'-phosphate)-2'-deoxyribonucleotide-DNA = a 3'-end 2'-deoxyribonucleotide-(2,3-dehydro-2,3-deoxyribose 5'-phosphate)-DNA + a 5'-end 5'-phospho-2'-deoxyribonucleoside-DNA + H(+)</text>
        <dbReference type="Rhea" id="RHEA:66592"/>
        <dbReference type="Rhea" id="RHEA-COMP:13180"/>
        <dbReference type="Rhea" id="RHEA-COMP:16897"/>
        <dbReference type="Rhea" id="RHEA-COMP:17067"/>
        <dbReference type="ChEBI" id="CHEBI:15378"/>
        <dbReference type="ChEBI" id="CHEBI:136412"/>
        <dbReference type="ChEBI" id="CHEBI:157695"/>
        <dbReference type="ChEBI" id="CHEBI:167181"/>
        <dbReference type="EC" id="4.2.99.18"/>
    </reaction>
</comment>
<comment type="cofactor">
    <cofactor evidence="2">
        <name>Zn(2+)</name>
        <dbReference type="ChEBI" id="CHEBI:29105"/>
    </cofactor>
    <text evidence="2">Binds 1 zinc ion per subunit.</text>
</comment>
<comment type="subunit">
    <text evidence="2">Monomer.</text>
</comment>
<comment type="similarity">
    <text evidence="2">Belongs to the FPG family.</text>
</comment>
<feature type="initiator methionine" description="Removed" evidence="1">
    <location>
        <position position="1"/>
    </location>
</feature>
<feature type="chain" id="PRO_1000094055" description="Formamidopyrimidine-DNA glycosylase">
    <location>
        <begin position="2"/>
        <end position="297"/>
    </location>
</feature>
<feature type="zinc finger region" description="FPG-type" evidence="2">
    <location>
        <begin position="259"/>
        <end position="295"/>
    </location>
</feature>
<feature type="active site" description="Schiff-base intermediate with DNA" evidence="2">
    <location>
        <position position="2"/>
    </location>
</feature>
<feature type="active site" description="Proton donor" evidence="2">
    <location>
        <position position="3"/>
    </location>
</feature>
<feature type="active site" description="Proton donor; for beta-elimination activity" evidence="2">
    <location>
        <position position="58"/>
    </location>
</feature>
<feature type="active site" description="Proton donor; for delta-elimination activity" evidence="2">
    <location>
        <position position="285"/>
    </location>
</feature>
<feature type="binding site" evidence="2">
    <location>
        <position position="106"/>
    </location>
    <ligand>
        <name>DNA</name>
        <dbReference type="ChEBI" id="CHEBI:16991"/>
    </ligand>
</feature>
<feature type="binding site" evidence="2">
    <location>
        <position position="125"/>
    </location>
    <ligand>
        <name>DNA</name>
        <dbReference type="ChEBI" id="CHEBI:16991"/>
    </ligand>
</feature>
<feature type="binding site" evidence="2">
    <location>
        <position position="168"/>
    </location>
    <ligand>
        <name>DNA</name>
        <dbReference type="ChEBI" id="CHEBI:16991"/>
    </ligand>
</feature>
<keyword id="KW-0227">DNA damage</keyword>
<keyword id="KW-0234">DNA repair</keyword>
<keyword id="KW-0238">DNA-binding</keyword>
<keyword id="KW-0326">Glycosidase</keyword>
<keyword id="KW-0378">Hydrolase</keyword>
<keyword id="KW-0456">Lyase</keyword>
<keyword id="KW-0479">Metal-binding</keyword>
<keyword id="KW-0511">Multifunctional enzyme</keyword>
<keyword id="KW-0862">Zinc</keyword>
<keyword id="KW-0863">Zinc-finger</keyword>
<reference key="1">
    <citation type="submission" date="2008-02" db="EMBL/GenBank/DDBJ databases">
        <title>Complete sequence of chromosome of Methylobacterium sp. 4-46.</title>
        <authorList>
            <consortium name="US DOE Joint Genome Institute"/>
            <person name="Copeland A."/>
            <person name="Lucas S."/>
            <person name="Lapidus A."/>
            <person name="Glavina del Rio T."/>
            <person name="Dalin E."/>
            <person name="Tice H."/>
            <person name="Bruce D."/>
            <person name="Goodwin L."/>
            <person name="Pitluck S."/>
            <person name="Chertkov O."/>
            <person name="Brettin T."/>
            <person name="Detter J.C."/>
            <person name="Han C."/>
            <person name="Kuske C.R."/>
            <person name="Schmutz J."/>
            <person name="Larimer F."/>
            <person name="Land M."/>
            <person name="Hauser L."/>
            <person name="Kyrpides N."/>
            <person name="Ivanova N."/>
            <person name="Marx C.J."/>
            <person name="Richardson P."/>
        </authorList>
    </citation>
    <scope>NUCLEOTIDE SEQUENCE [LARGE SCALE GENOMIC DNA]</scope>
    <source>
        <strain>4-46</strain>
    </source>
</reference>
<protein>
    <recommendedName>
        <fullName evidence="2">Formamidopyrimidine-DNA glycosylase</fullName>
        <shortName evidence="2">Fapy-DNA glycosylase</shortName>
        <ecNumber evidence="2">3.2.2.23</ecNumber>
    </recommendedName>
    <alternativeName>
        <fullName evidence="2">DNA-(apurinic or apyrimidinic site) lyase MutM</fullName>
        <shortName evidence="2">AP lyase MutM</shortName>
        <ecNumber evidence="2">4.2.99.18</ecNumber>
    </alternativeName>
</protein>
<accession>B0UR68</accession>
<proteinExistence type="inferred from homology"/>
<name>FPG_METS4</name>
<sequence>MPELPEVETVRRGLEPALVGARFTTVHLARPDLRFPLPARFAARLTGQRVEALSRRAKYLVADLSSGDALIMHLGMSGRFDVVFPDGRQLSPGEFYLEGAPGQAKHDHVVFALSNGARVTYNDVRRFGFMDLVRRAELETCRHFAGMGIEPLGSDLSGEAVARLFRGRRTPLKAALLDQRLIAGLGNIYVCEALHRARLHPEAAAGTLADAAGRPTRAAARLAQVIRDVLTEAVAAGGSTLRDYAHTDGTQGAFQHRFRVYDREGLACTARGCRGRVRRIVQAGRSTFYCETCQPAP</sequence>
<dbReference type="EC" id="3.2.2.23" evidence="2"/>
<dbReference type="EC" id="4.2.99.18" evidence="2"/>
<dbReference type="EMBL" id="CP000943">
    <property type="protein sequence ID" value="ACA20520.1"/>
    <property type="molecule type" value="Genomic_DNA"/>
</dbReference>
<dbReference type="RefSeq" id="WP_012335898.1">
    <property type="nucleotide sequence ID" value="NC_010511.1"/>
</dbReference>
<dbReference type="SMR" id="B0UR68"/>
<dbReference type="STRING" id="426117.M446_6254"/>
<dbReference type="KEGG" id="met:M446_6254"/>
<dbReference type="eggNOG" id="COG0266">
    <property type="taxonomic scope" value="Bacteria"/>
</dbReference>
<dbReference type="HOGENOM" id="CLU_038423_1_1_5"/>
<dbReference type="GO" id="GO:0034039">
    <property type="term" value="F:8-oxo-7,8-dihydroguanine DNA N-glycosylase activity"/>
    <property type="evidence" value="ECO:0007669"/>
    <property type="project" value="TreeGrafter"/>
</dbReference>
<dbReference type="GO" id="GO:0140078">
    <property type="term" value="F:class I DNA-(apurinic or apyrimidinic site) endonuclease activity"/>
    <property type="evidence" value="ECO:0007669"/>
    <property type="project" value="UniProtKB-EC"/>
</dbReference>
<dbReference type="GO" id="GO:0003684">
    <property type="term" value="F:damaged DNA binding"/>
    <property type="evidence" value="ECO:0007669"/>
    <property type="project" value="InterPro"/>
</dbReference>
<dbReference type="GO" id="GO:0008270">
    <property type="term" value="F:zinc ion binding"/>
    <property type="evidence" value="ECO:0007669"/>
    <property type="project" value="UniProtKB-UniRule"/>
</dbReference>
<dbReference type="GO" id="GO:0006284">
    <property type="term" value="P:base-excision repair"/>
    <property type="evidence" value="ECO:0007669"/>
    <property type="project" value="InterPro"/>
</dbReference>
<dbReference type="CDD" id="cd08966">
    <property type="entry name" value="EcFpg-like_N"/>
    <property type="match status" value="1"/>
</dbReference>
<dbReference type="FunFam" id="1.10.8.50:FF:000003">
    <property type="entry name" value="Formamidopyrimidine-DNA glycosylase"/>
    <property type="match status" value="1"/>
</dbReference>
<dbReference type="Gene3D" id="1.10.8.50">
    <property type="match status" value="1"/>
</dbReference>
<dbReference type="Gene3D" id="3.20.190.10">
    <property type="entry name" value="MutM-like, N-terminal"/>
    <property type="match status" value="1"/>
</dbReference>
<dbReference type="HAMAP" id="MF_00103">
    <property type="entry name" value="Fapy_DNA_glycosyl"/>
    <property type="match status" value="1"/>
</dbReference>
<dbReference type="InterPro" id="IPR015886">
    <property type="entry name" value="DNA_glyclase/AP_lyase_DNA-bd"/>
</dbReference>
<dbReference type="InterPro" id="IPR020629">
    <property type="entry name" value="Formamido-pyr_DNA_Glyclase"/>
</dbReference>
<dbReference type="InterPro" id="IPR012319">
    <property type="entry name" value="FPG_cat"/>
</dbReference>
<dbReference type="InterPro" id="IPR035937">
    <property type="entry name" value="MutM-like_N-ter"/>
</dbReference>
<dbReference type="InterPro" id="IPR010979">
    <property type="entry name" value="Ribosomal_uS13-like_H2TH"/>
</dbReference>
<dbReference type="InterPro" id="IPR000214">
    <property type="entry name" value="Znf_DNA_glyclase/AP_lyase"/>
</dbReference>
<dbReference type="InterPro" id="IPR010663">
    <property type="entry name" value="Znf_FPG/IleRS"/>
</dbReference>
<dbReference type="NCBIfam" id="TIGR00577">
    <property type="entry name" value="fpg"/>
    <property type="match status" value="1"/>
</dbReference>
<dbReference type="NCBIfam" id="NF002211">
    <property type="entry name" value="PRK01103.1"/>
    <property type="match status" value="1"/>
</dbReference>
<dbReference type="PANTHER" id="PTHR22993">
    <property type="entry name" value="FORMAMIDOPYRIMIDINE-DNA GLYCOSYLASE"/>
    <property type="match status" value="1"/>
</dbReference>
<dbReference type="PANTHER" id="PTHR22993:SF9">
    <property type="entry name" value="FORMAMIDOPYRIMIDINE-DNA GLYCOSYLASE"/>
    <property type="match status" value="1"/>
</dbReference>
<dbReference type="Pfam" id="PF01149">
    <property type="entry name" value="Fapy_DNA_glyco"/>
    <property type="match status" value="1"/>
</dbReference>
<dbReference type="Pfam" id="PF06831">
    <property type="entry name" value="H2TH"/>
    <property type="match status" value="1"/>
</dbReference>
<dbReference type="Pfam" id="PF06827">
    <property type="entry name" value="zf-FPG_IleRS"/>
    <property type="match status" value="1"/>
</dbReference>
<dbReference type="SMART" id="SM00898">
    <property type="entry name" value="Fapy_DNA_glyco"/>
    <property type="match status" value="1"/>
</dbReference>
<dbReference type="SMART" id="SM01232">
    <property type="entry name" value="H2TH"/>
    <property type="match status" value="1"/>
</dbReference>
<dbReference type="SUPFAM" id="SSF57716">
    <property type="entry name" value="Glucocorticoid receptor-like (DNA-binding domain)"/>
    <property type="match status" value="1"/>
</dbReference>
<dbReference type="SUPFAM" id="SSF81624">
    <property type="entry name" value="N-terminal domain of MutM-like DNA repair proteins"/>
    <property type="match status" value="1"/>
</dbReference>
<dbReference type="SUPFAM" id="SSF46946">
    <property type="entry name" value="S13-like H2TH domain"/>
    <property type="match status" value="1"/>
</dbReference>
<dbReference type="PROSITE" id="PS51068">
    <property type="entry name" value="FPG_CAT"/>
    <property type="match status" value="1"/>
</dbReference>
<dbReference type="PROSITE" id="PS51066">
    <property type="entry name" value="ZF_FPG_2"/>
    <property type="match status" value="1"/>
</dbReference>